<dbReference type="EC" id="2.4.2.29" evidence="1"/>
<dbReference type="EMBL" id="CU633749">
    <property type="protein sequence ID" value="CAQ70519.1"/>
    <property type="molecule type" value="Genomic_DNA"/>
</dbReference>
<dbReference type="RefSeq" id="WP_012353815.1">
    <property type="nucleotide sequence ID" value="NC_010528.1"/>
</dbReference>
<dbReference type="SMR" id="B3R6J4"/>
<dbReference type="GeneID" id="29762619"/>
<dbReference type="KEGG" id="cti:RALTA_A2588"/>
<dbReference type="eggNOG" id="COG0343">
    <property type="taxonomic scope" value="Bacteria"/>
</dbReference>
<dbReference type="HOGENOM" id="CLU_022060_0_1_4"/>
<dbReference type="BioCyc" id="CTAI977880:RALTA_RS12590-MONOMER"/>
<dbReference type="UniPathway" id="UPA00392"/>
<dbReference type="Proteomes" id="UP000001692">
    <property type="component" value="Chromosome 1"/>
</dbReference>
<dbReference type="GO" id="GO:0005829">
    <property type="term" value="C:cytosol"/>
    <property type="evidence" value="ECO:0007669"/>
    <property type="project" value="TreeGrafter"/>
</dbReference>
<dbReference type="GO" id="GO:0046872">
    <property type="term" value="F:metal ion binding"/>
    <property type="evidence" value="ECO:0007669"/>
    <property type="project" value="UniProtKB-KW"/>
</dbReference>
<dbReference type="GO" id="GO:0008479">
    <property type="term" value="F:tRNA-guanosine(34) queuine transglycosylase activity"/>
    <property type="evidence" value="ECO:0007669"/>
    <property type="project" value="UniProtKB-UniRule"/>
</dbReference>
<dbReference type="GO" id="GO:0008616">
    <property type="term" value="P:queuosine biosynthetic process"/>
    <property type="evidence" value="ECO:0007669"/>
    <property type="project" value="UniProtKB-UniRule"/>
</dbReference>
<dbReference type="GO" id="GO:0002099">
    <property type="term" value="P:tRNA wobble guanine modification"/>
    <property type="evidence" value="ECO:0007669"/>
    <property type="project" value="TreeGrafter"/>
</dbReference>
<dbReference type="GO" id="GO:0101030">
    <property type="term" value="P:tRNA-guanine transglycosylation"/>
    <property type="evidence" value="ECO:0007669"/>
    <property type="project" value="InterPro"/>
</dbReference>
<dbReference type="FunFam" id="3.20.20.105:FF:000001">
    <property type="entry name" value="Queuine tRNA-ribosyltransferase"/>
    <property type="match status" value="1"/>
</dbReference>
<dbReference type="Gene3D" id="3.20.20.105">
    <property type="entry name" value="Queuine tRNA-ribosyltransferase-like"/>
    <property type="match status" value="1"/>
</dbReference>
<dbReference type="HAMAP" id="MF_00168">
    <property type="entry name" value="Q_tRNA_Tgt"/>
    <property type="match status" value="1"/>
</dbReference>
<dbReference type="InterPro" id="IPR050076">
    <property type="entry name" value="ArchSynthase1/Queuine_TRR"/>
</dbReference>
<dbReference type="InterPro" id="IPR004803">
    <property type="entry name" value="TGT"/>
</dbReference>
<dbReference type="InterPro" id="IPR036511">
    <property type="entry name" value="TGT-like_sf"/>
</dbReference>
<dbReference type="InterPro" id="IPR002616">
    <property type="entry name" value="tRNA_ribo_trans-like"/>
</dbReference>
<dbReference type="NCBIfam" id="TIGR00430">
    <property type="entry name" value="Q_tRNA_tgt"/>
    <property type="match status" value="1"/>
</dbReference>
<dbReference type="NCBIfam" id="TIGR00449">
    <property type="entry name" value="tgt_general"/>
    <property type="match status" value="1"/>
</dbReference>
<dbReference type="PANTHER" id="PTHR46499">
    <property type="entry name" value="QUEUINE TRNA-RIBOSYLTRANSFERASE"/>
    <property type="match status" value="1"/>
</dbReference>
<dbReference type="PANTHER" id="PTHR46499:SF1">
    <property type="entry name" value="QUEUINE TRNA-RIBOSYLTRANSFERASE"/>
    <property type="match status" value="1"/>
</dbReference>
<dbReference type="Pfam" id="PF01702">
    <property type="entry name" value="TGT"/>
    <property type="match status" value="1"/>
</dbReference>
<dbReference type="SUPFAM" id="SSF51713">
    <property type="entry name" value="tRNA-guanine transglycosylase"/>
    <property type="match status" value="1"/>
</dbReference>
<gene>
    <name evidence="1" type="primary">tgt</name>
    <name type="ordered locus">RALTA_A2588</name>
</gene>
<organism>
    <name type="scientific">Cupriavidus taiwanensis (strain DSM 17343 / BCRC 17206 / CCUG 44338 / CIP 107171 / LMG 19424 / R1)</name>
    <name type="common">Ralstonia taiwanensis (strain LMG 19424)</name>
    <dbReference type="NCBI Taxonomy" id="977880"/>
    <lineage>
        <taxon>Bacteria</taxon>
        <taxon>Pseudomonadati</taxon>
        <taxon>Pseudomonadota</taxon>
        <taxon>Betaproteobacteria</taxon>
        <taxon>Burkholderiales</taxon>
        <taxon>Burkholderiaceae</taxon>
        <taxon>Cupriavidus</taxon>
    </lineage>
</organism>
<name>TGT_CUPTR</name>
<reference key="1">
    <citation type="journal article" date="2008" name="Genome Res.">
        <title>Genome sequence of the beta-rhizobium Cupriavidus taiwanensis and comparative genomics of rhizobia.</title>
        <authorList>
            <person name="Amadou C."/>
            <person name="Pascal G."/>
            <person name="Mangenot S."/>
            <person name="Glew M."/>
            <person name="Bontemps C."/>
            <person name="Capela D."/>
            <person name="Carrere S."/>
            <person name="Cruveiller S."/>
            <person name="Dossat C."/>
            <person name="Lajus A."/>
            <person name="Marchetti M."/>
            <person name="Poinsot V."/>
            <person name="Rouy Z."/>
            <person name="Servin B."/>
            <person name="Saad M."/>
            <person name="Schenowitz C."/>
            <person name="Barbe V."/>
            <person name="Batut J."/>
            <person name="Medigue C."/>
            <person name="Masson-Boivin C."/>
        </authorList>
    </citation>
    <scope>NUCLEOTIDE SEQUENCE [LARGE SCALE GENOMIC DNA]</scope>
    <source>
        <strain>DSM 17343 / BCRC 17206 / CCUG 44338 / CIP 107171 / LMG 19424 / R1</strain>
    </source>
</reference>
<protein>
    <recommendedName>
        <fullName evidence="1">Queuine tRNA-ribosyltransferase</fullName>
        <ecNumber evidence="1">2.4.2.29</ecNumber>
    </recommendedName>
    <alternativeName>
        <fullName evidence="1">Guanine insertion enzyme</fullName>
    </alternativeName>
    <alternativeName>
        <fullName evidence="1">tRNA-guanine transglycosylase</fullName>
    </alternativeName>
</protein>
<keyword id="KW-0328">Glycosyltransferase</keyword>
<keyword id="KW-0479">Metal-binding</keyword>
<keyword id="KW-0671">Queuosine biosynthesis</keyword>
<keyword id="KW-0808">Transferase</keyword>
<keyword id="KW-0819">tRNA processing</keyword>
<keyword id="KW-0862">Zinc</keyword>
<accession>B3R6J4</accession>
<sequence>MLNFELITTDGNARRGRVTLNHGVVETPIFMPVGTYGSVKAMSPLELNEIGAQIILGNTFHLWLRPGLDVVNAHEGLHRFIGWDKPILTDSGGFQVFSLGDLRKITEDGVTFASPVNGDKLFLSPEISMQIQRTLNSDIVMQFDECTPYEIDGRPATHEEAAKSMRMSLRWARRSRDEFERLANPNALFGIVQGGMYEDLRDESLAGLSELDFHGFAIGGLSVGEPKEDMMRVLEHVAPRLPANKPHYLMGVGTPEDLVAGVAAGVDMFDCVMPTRNARNGWLFTRYGDVKIKNAAHRNDPRPLDESCACYTCRNFSRAYLHHLHRVGEILGARLNTIHNLHYYLQLMREVREAIEQHRFADFRRQFAADRARGTQ</sequence>
<comment type="function">
    <text evidence="1">Catalyzes the base-exchange of a guanine (G) residue with the queuine precursor 7-aminomethyl-7-deazaguanine (PreQ1) at position 34 (anticodon wobble position) in tRNAs with GU(N) anticodons (tRNA-Asp, -Asn, -His and -Tyr). Catalysis occurs through a double-displacement mechanism. The nucleophile active site attacks the C1' of nucleotide 34 to detach the guanine base from the RNA, forming a covalent enzyme-RNA intermediate. The proton acceptor active site deprotonates the incoming PreQ1, allowing a nucleophilic attack on the C1' of the ribose to form the product. After dissociation, two additional enzymatic reactions on the tRNA convert PreQ1 to queuine (Q), resulting in the hypermodified nucleoside queuosine (7-(((4,5-cis-dihydroxy-2-cyclopenten-1-yl)amino)methyl)-7-deazaguanosine).</text>
</comment>
<comment type="catalytic activity">
    <reaction evidence="1">
        <text>7-aminomethyl-7-carbaguanine + guanosine(34) in tRNA = 7-aminomethyl-7-carbaguanosine(34) in tRNA + guanine</text>
        <dbReference type="Rhea" id="RHEA:24104"/>
        <dbReference type="Rhea" id="RHEA-COMP:10341"/>
        <dbReference type="Rhea" id="RHEA-COMP:10342"/>
        <dbReference type="ChEBI" id="CHEBI:16235"/>
        <dbReference type="ChEBI" id="CHEBI:58703"/>
        <dbReference type="ChEBI" id="CHEBI:74269"/>
        <dbReference type="ChEBI" id="CHEBI:82833"/>
        <dbReference type="EC" id="2.4.2.29"/>
    </reaction>
</comment>
<comment type="cofactor">
    <cofactor evidence="1">
        <name>Zn(2+)</name>
        <dbReference type="ChEBI" id="CHEBI:29105"/>
    </cofactor>
    <text evidence="1">Binds 1 zinc ion per subunit.</text>
</comment>
<comment type="pathway">
    <text evidence="1">tRNA modification; tRNA-queuosine biosynthesis.</text>
</comment>
<comment type="subunit">
    <text evidence="1">Homodimer. Within each dimer, one monomer is responsible for RNA recognition and catalysis, while the other monomer binds to the replacement base PreQ1.</text>
</comment>
<comment type="similarity">
    <text evidence="1">Belongs to the queuine tRNA-ribosyltransferase family.</text>
</comment>
<feature type="chain" id="PRO_1000097538" description="Queuine tRNA-ribosyltransferase">
    <location>
        <begin position="1"/>
        <end position="376"/>
    </location>
</feature>
<feature type="region of interest" description="RNA binding" evidence="1">
    <location>
        <begin position="251"/>
        <end position="257"/>
    </location>
</feature>
<feature type="region of interest" description="RNA binding; important for wobble base 34 recognition" evidence="1">
    <location>
        <begin position="275"/>
        <end position="279"/>
    </location>
</feature>
<feature type="active site" description="Proton acceptor" evidence="1">
    <location>
        <position position="90"/>
    </location>
</feature>
<feature type="active site" description="Nucleophile" evidence="1">
    <location>
        <position position="270"/>
    </location>
</feature>
<feature type="binding site" evidence="1">
    <location>
        <begin position="90"/>
        <end position="94"/>
    </location>
    <ligand>
        <name>substrate</name>
    </ligand>
</feature>
<feature type="binding site" evidence="1">
    <location>
        <position position="144"/>
    </location>
    <ligand>
        <name>substrate</name>
    </ligand>
</feature>
<feature type="binding site" evidence="1">
    <location>
        <position position="193"/>
    </location>
    <ligand>
        <name>substrate</name>
    </ligand>
</feature>
<feature type="binding site" evidence="1">
    <location>
        <position position="220"/>
    </location>
    <ligand>
        <name>substrate</name>
    </ligand>
</feature>
<feature type="binding site" evidence="1">
    <location>
        <position position="308"/>
    </location>
    <ligand>
        <name>Zn(2+)</name>
        <dbReference type="ChEBI" id="CHEBI:29105"/>
    </ligand>
</feature>
<feature type="binding site" evidence="1">
    <location>
        <position position="310"/>
    </location>
    <ligand>
        <name>Zn(2+)</name>
        <dbReference type="ChEBI" id="CHEBI:29105"/>
    </ligand>
</feature>
<feature type="binding site" evidence="1">
    <location>
        <position position="313"/>
    </location>
    <ligand>
        <name>Zn(2+)</name>
        <dbReference type="ChEBI" id="CHEBI:29105"/>
    </ligand>
</feature>
<feature type="binding site" evidence="1">
    <location>
        <position position="339"/>
    </location>
    <ligand>
        <name>Zn(2+)</name>
        <dbReference type="ChEBI" id="CHEBI:29105"/>
    </ligand>
</feature>
<proteinExistence type="inferred from homology"/>
<evidence type="ECO:0000255" key="1">
    <source>
        <dbReference type="HAMAP-Rule" id="MF_00168"/>
    </source>
</evidence>